<evidence type="ECO:0000255" key="1">
    <source>
        <dbReference type="HAMAP-Rule" id="MF_01516"/>
    </source>
</evidence>
<keyword id="KW-0520">NAD</keyword>
<keyword id="KW-0560">Oxidoreductase</keyword>
<keyword id="KW-1185">Reference proteome</keyword>
<keyword id="KW-0816">Tricarboxylic acid cycle</keyword>
<feature type="chain" id="PRO_0000294300" description="Malate dehydrogenase">
    <location>
        <begin position="1"/>
        <end position="311"/>
    </location>
</feature>
<feature type="active site" description="Proton acceptor" evidence="1">
    <location>
        <position position="177"/>
    </location>
</feature>
<feature type="binding site" evidence="1">
    <location>
        <begin position="7"/>
        <end position="13"/>
    </location>
    <ligand>
        <name>NAD(+)</name>
        <dbReference type="ChEBI" id="CHEBI:57540"/>
    </ligand>
</feature>
<feature type="binding site" evidence="1">
    <location>
        <position position="34"/>
    </location>
    <ligand>
        <name>NAD(+)</name>
        <dbReference type="ChEBI" id="CHEBI:57540"/>
    </ligand>
</feature>
<feature type="binding site" evidence="1">
    <location>
        <position position="81"/>
    </location>
    <ligand>
        <name>substrate</name>
    </ligand>
</feature>
<feature type="binding site" evidence="1">
    <location>
        <position position="87"/>
    </location>
    <ligand>
        <name>substrate</name>
    </ligand>
</feature>
<feature type="binding site" evidence="1">
    <location>
        <position position="94"/>
    </location>
    <ligand>
        <name>NAD(+)</name>
        <dbReference type="ChEBI" id="CHEBI:57540"/>
    </ligand>
</feature>
<feature type="binding site" evidence="1">
    <location>
        <begin position="117"/>
        <end position="119"/>
    </location>
    <ligand>
        <name>NAD(+)</name>
        <dbReference type="ChEBI" id="CHEBI:57540"/>
    </ligand>
</feature>
<feature type="binding site" evidence="1">
    <location>
        <position position="119"/>
    </location>
    <ligand>
        <name>substrate</name>
    </ligand>
</feature>
<feature type="binding site" evidence="1">
    <location>
        <position position="153"/>
    </location>
    <ligand>
        <name>substrate</name>
    </ligand>
</feature>
<feature type="binding site" evidence="1">
    <location>
        <position position="227"/>
    </location>
    <ligand>
        <name>NAD(+)</name>
        <dbReference type="ChEBI" id="CHEBI:57540"/>
    </ligand>
</feature>
<dbReference type="EC" id="1.1.1.37" evidence="1"/>
<dbReference type="EMBL" id="CP000507">
    <property type="protein sequence ID" value="ABL98880.1"/>
    <property type="molecule type" value="Genomic_DNA"/>
</dbReference>
<dbReference type="RefSeq" id="WP_011758790.1">
    <property type="nucleotide sequence ID" value="NC_008700.1"/>
</dbReference>
<dbReference type="SMR" id="A1S3C4"/>
<dbReference type="STRING" id="326297.Sama_0672"/>
<dbReference type="KEGG" id="saz:Sama_0672"/>
<dbReference type="eggNOG" id="COG0039">
    <property type="taxonomic scope" value="Bacteria"/>
</dbReference>
<dbReference type="HOGENOM" id="CLU_047181_1_0_6"/>
<dbReference type="OrthoDB" id="9802969at2"/>
<dbReference type="Proteomes" id="UP000009175">
    <property type="component" value="Chromosome"/>
</dbReference>
<dbReference type="GO" id="GO:0005737">
    <property type="term" value="C:cytoplasm"/>
    <property type="evidence" value="ECO:0007669"/>
    <property type="project" value="TreeGrafter"/>
</dbReference>
<dbReference type="GO" id="GO:0030060">
    <property type="term" value="F:L-malate dehydrogenase (NAD+) activity"/>
    <property type="evidence" value="ECO:0007669"/>
    <property type="project" value="UniProtKB-UniRule"/>
</dbReference>
<dbReference type="GO" id="GO:0006108">
    <property type="term" value="P:malate metabolic process"/>
    <property type="evidence" value="ECO:0007669"/>
    <property type="project" value="InterPro"/>
</dbReference>
<dbReference type="GO" id="GO:0006099">
    <property type="term" value="P:tricarboxylic acid cycle"/>
    <property type="evidence" value="ECO:0007669"/>
    <property type="project" value="UniProtKB-UniRule"/>
</dbReference>
<dbReference type="CDD" id="cd01337">
    <property type="entry name" value="MDH_glyoxysomal_mitochondrial"/>
    <property type="match status" value="1"/>
</dbReference>
<dbReference type="FunFam" id="3.40.50.720:FF:000017">
    <property type="entry name" value="Malate dehydrogenase"/>
    <property type="match status" value="1"/>
</dbReference>
<dbReference type="FunFam" id="3.90.110.10:FF:000001">
    <property type="entry name" value="Malate dehydrogenase"/>
    <property type="match status" value="1"/>
</dbReference>
<dbReference type="Gene3D" id="3.90.110.10">
    <property type="entry name" value="Lactate dehydrogenase/glycoside hydrolase, family 4, C-terminal"/>
    <property type="match status" value="1"/>
</dbReference>
<dbReference type="Gene3D" id="3.40.50.720">
    <property type="entry name" value="NAD(P)-binding Rossmann-like Domain"/>
    <property type="match status" value="1"/>
</dbReference>
<dbReference type="HAMAP" id="MF_01516">
    <property type="entry name" value="Malate_dehydrog_1"/>
    <property type="match status" value="1"/>
</dbReference>
<dbReference type="InterPro" id="IPR001557">
    <property type="entry name" value="L-lactate/malate_DH"/>
</dbReference>
<dbReference type="InterPro" id="IPR022383">
    <property type="entry name" value="Lactate/malate_DH_C"/>
</dbReference>
<dbReference type="InterPro" id="IPR001236">
    <property type="entry name" value="Lactate/malate_DH_N"/>
</dbReference>
<dbReference type="InterPro" id="IPR015955">
    <property type="entry name" value="Lactate_DH/Glyco_Ohase_4_C"/>
</dbReference>
<dbReference type="InterPro" id="IPR001252">
    <property type="entry name" value="Malate_DH_AS"/>
</dbReference>
<dbReference type="InterPro" id="IPR010097">
    <property type="entry name" value="Malate_DH_type1"/>
</dbReference>
<dbReference type="InterPro" id="IPR023958">
    <property type="entry name" value="Malate_DH_type1_bac"/>
</dbReference>
<dbReference type="InterPro" id="IPR036291">
    <property type="entry name" value="NAD(P)-bd_dom_sf"/>
</dbReference>
<dbReference type="NCBIfam" id="TIGR01772">
    <property type="entry name" value="MDH_euk_gproteo"/>
    <property type="match status" value="1"/>
</dbReference>
<dbReference type="PANTHER" id="PTHR11540">
    <property type="entry name" value="MALATE AND LACTATE DEHYDROGENASE"/>
    <property type="match status" value="1"/>
</dbReference>
<dbReference type="PANTHER" id="PTHR11540:SF16">
    <property type="entry name" value="MALATE DEHYDROGENASE, MITOCHONDRIAL"/>
    <property type="match status" value="1"/>
</dbReference>
<dbReference type="Pfam" id="PF02866">
    <property type="entry name" value="Ldh_1_C"/>
    <property type="match status" value="1"/>
</dbReference>
<dbReference type="Pfam" id="PF00056">
    <property type="entry name" value="Ldh_1_N"/>
    <property type="match status" value="1"/>
</dbReference>
<dbReference type="PIRSF" id="PIRSF000102">
    <property type="entry name" value="Lac_mal_DH"/>
    <property type="match status" value="1"/>
</dbReference>
<dbReference type="SUPFAM" id="SSF56327">
    <property type="entry name" value="LDH C-terminal domain-like"/>
    <property type="match status" value="1"/>
</dbReference>
<dbReference type="SUPFAM" id="SSF51735">
    <property type="entry name" value="NAD(P)-binding Rossmann-fold domains"/>
    <property type="match status" value="1"/>
</dbReference>
<dbReference type="PROSITE" id="PS00068">
    <property type="entry name" value="MDH"/>
    <property type="match status" value="1"/>
</dbReference>
<sequence>MKVAVLGAAGGIGQALALLLKTQLPAGSKLSLYDIAPVTPGVAVDLSHIPTAVEVKGFCGEDPTPALEGADVVLISAGVARKPGMDRSDLFNINAGIVRNLIEKVAATCPKALVGIITNPVNTTVAIAAEVLKKAGVYDKNRLFGVTTLDVIRAETFVAEAKGVDVASVKVNVIGGHSGVTILPLLSQIEGVNFSDEEVAALTKRIQNAGTEVVEAKAGGGSATLSMGQAAFRFGMSLIRGLQGEANVVECAYVDGGSEHAVFFAQPVLLGKNGVEKVLPYGEVSAFEANARDAMLDTLKGDIQLGVDFVK</sequence>
<proteinExistence type="inferred from homology"/>
<gene>
    <name evidence="1" type="primary">mdh</name>
    <name type="ordered locus">Sama_0672</name>
</gene>
<organism>
    <name type="scientific">Shewanella amazonensis (strain ATCC BAA-1098 / SB2B)</name>
    <dbReference type="NCBI Taxonomy" id="326297"/>
    <lineage>
        <taxon>Bacteria</taxon>
        <taxon>Pseudomonadati</taxon>
        <taxon>Pseudomonadota</taxon>
        <taxon>Gammaproteobacteria</taxon>
        <taxon>Alteromonadales</taxon>
        <taxon>Shewanellaceae</taxon>
        <taxon>Shewanella</taxon>
    </lineage>
</organism>
<comment type="function">
    <text evidence="1">Catalyzes the reversible oxidation of malate to oxaloacetate.</text>
</comment>
<comment type="catalytic activity">
    <reaction evidence="1">
        <text>(S)-malate + NAD(+) = oxaloacetate + NADH + H(+)</text>
        <dbReference type="Rhea" id="RHEA:21432"/>
        <dbReference type="ChEBI" id="CHEBI:15378"/>
        <dbReference type="ChEBI" id="CHEBI:15589"/>
        <dbReference type="ChEBI" id="CHEBI:16452"/>
        <dbReference type="ChEBI" id="CHEBI:57540"/>
        <dbReference type="ChEBI" id="CHEBI:57945"/>
        <dbReference type="EC" id="1.1.1.37"/>
    </reaction>
</comment>
<comment type="subunit">
    <text evidence="1">Homodimer.</text>
</comment>
<comment type="similarity">
    <text evidence="1">Belongs to the LDH/MDH superfamily. MDH type 1 family.</text>
</comment>
<accession>A1S3C4</accession>
<reference key="1">
    <citation type="submission" date="2006-12" db="EMBL/GenBank/DDBJ databases">
        <title>Complete sequence of Shewanella amazonensis SB2B.</title>
        <authorList>
            <consortium name="US DOE Joint Genome Institute"/>
            <person name="Copeland A."/>
            <person name="Lucas S."/>
            <person name="Lapidus A."/>
            <person name="Barry K."/>
            <person name="Detter J.C."/>
            <person name="Glavina del Rio T."/>
            <person name="Hammon N."/>
            <person name="Israni S."/>
            <person name="Dalin E."/>
            <person name="Tice H."/>
            <person name="Pitluck S."/>
            <person name="Munk A.C."/>
            <person name="Brettin T."/>
            <person name="Bruce D."/>
            <person name="Han C."/>
            <person name="Tapia R."/>
            <person name="Gilna P."/>
            <person name="Schmutz J."/>
            <person name="Larimer F."/>
            <person name="Land M."/>
            <person name="Hauser L."/>
            <person name="Kyrpides N."/>
            <person name="Mikhailova N."/>
            <person name="Fredrickson J."/>
            <person name="Richardson P."/>
        </authorList>
    </citation>
    <scope>NUCLEOTIDE SEQUENCE [LARGE SCALE GENOMIC DNA]</scope>
    <source>
        <strain>ATCC BAA-1098 / SB2B</strain>
    </source>
</reference>
<name>MDH_SHEAM</name>
<protein>
    <recommendedName>
        <fullName evidence="1">Malate dehydrogenase</fullName>
        <ecNumber evidence="1">1.1.1.37</ecNumber>
    </recommendedName>
</protein>